<gene>
    <name evidence="1" type="primary">uppS2</name>
    <name type="ordered locus">CE2182</name>
</gene>
<feature type="chain" id="PRO_0000123604" description="Isoprenyl transferase 2">
    <location>
        <begin position="1"/>
        <end position="243"/>
    </location>
</feature>
<feature type="active site" evidence="1">
    <location>
        <position position="23"/>
    </location>
</feature>
<feature type="active site" description="Proton acceptor" evidence="1">
    <location>
        <position position="71"/>
    </location>
</feature>
<feature type="binding site" evidence="1">
    <location>
        <position position="23"/>
    </location>
    <ligand>
        <name>Mg(2+)</name>
        <dbReference type="ChEBI" id="CHEBI:18420"/>
    </ligand>
</feature>
<feature type="binding site" evidence="1">
    <location>
        <begin position="24"/>
        <end position="27"/>
    </location>
    <ligand>
        <name>substrate</name>
    </ligand>
</feature>
<feature type="binding site" evidence="1">
    <location>
        <position position="28"/>
    </location>
    <ligand>
        <name>substrate</name>
    </ligand>
</feature>
<feature type="binding site" evidence="1">
    <location>
        <position position="36"/>
    </location>
    <ligand>
        <name>substrate</name>
    </ligand>
</feature>
<feature type="binding site" evidence="1">
    <location>
        <position position="40"/>
    </location>
    <ligand>
        <name>substrate</name>
    </ligand>
</feature>
<feature type="binding site" evidence="1">
    <location>
        <begin position="68"/>
        <end position="70"/>
    </location>
    <ligand>
        <name>substrate</name>
    </ligand>
</feature>
<feature type="binding site" evidence="1">
    <location>
        <position position="72"/>
    </location>
    <ligand>
        <name>substrate</name>
    </ligand>
</feature>
<feature type="binding site" evidence="1">
    <location>
        <position position="74"/>
    </location>
    <ligand>
        <name>substrate</name>
    </ligand>
</feature>
<feature type="binding site" evidence="1">
    <location>
        <position position="191"/>
    </location>
    <ligand>
        <name>substrate</name>
    </ligand>
</feature>
<feature type="binding site" evidence="1">
    <location>
        <begin position="197"/>
        <end position="199"/>
    </location>
    <ligand>
        <name>substrate</name>
    </ligand>
</feature>
<feature type="binding site" evidence="1">
    <location>
        <position position="210"/>
    </location>
    <ligand>
        <name>Mg(2+)</name>
        <dbReference type="ChEBI" id="CHEBI:18420"/>
    </ligand>
</feature>
<sequence>MSELVPPNIPAEFLPRHIALVMDGNGRWATEKGMKRTEGHRRGEAVLLDVVDACLALGVPYLSAYAFSTENWRRSTEEVRFLMGFNRDVLRRQRDGLHEKGVRVRWVGRRPRLWRSVIRELEAAEELTKDNTNMTLAMCVNYGGRAEIIDAAREIARQAAAGQLRPEQINEKTFPDFLDEPDMPDVDLFLRPSGEKRTSNFLLWQSAYAEMVYQDKLFPDFTPQDLFDAVEEYARRDRRFGTA</sequence>
<accession>Q8FNG2</accession>
<name>ISPT2_COREF</name>
<proteinExistence type="inferred from homology"/>
<dbReference type="EC" id="2.5.1.-" evidence="1"/>
<dbReference type="EMBL" id="BA000035">
    <property type="protein sequence ID" value="BAC18992.1"/>
    <property type="molecule type" value="Genomic_DNA"/>
</dbReference>
<dbReference type="SMR" id="Q8FNG2"/>
<dbReference type="STRING" id="196164.gene:10742613"/>
<dbReference type="KEGG" id="cef:CE2182"/>
<dbReference type="eggNOG" id="COG0020">
    <property type="taxonomic scope" value="Bacteria"/>
</dbReference>
<dbReference type="HOGENOM" id="CLU_038505_1_2_11"/>
<dbReference type="OrthoDB" id="4191603at2"/>
<dbReference type="Proteomes" id="UP000001409">
    <property type="component" value="Chromosome"/>
</dbReference>
<dbReference type="GO" id="GO:0005829">
    <property type="term" value="C:cytosol"/>
    <property type="evidence" value="ECO:0007669"/>
    <property type="project" value="TreeGrafter"/>
</dbReference>
<dbReference type="GO" id="GO:0005886">
    <property type="term" value="C:plasma membrane"/>
    <property type="evidence" value="ECO:0007669"/>
    <property type="project" value="TreeGrafter"/>
</dbReference>
<dbReference type="GO" id="GO:0008834">
    <property type="term" value="F:ditrans,polycis-undecaprenyl-diphosphate synthase [(2E,6E)-farnesyl-diphosphate specific] activity"/>
    <property type="evidence" value="ECO:0007669"/>
    <property type="project" value="TreeGrafter"/>
</dbReference>
<dbReference type="GO" id="GO:0000287">
    <property type="term" value="F:magnesium ion binding"/>
    <property type="evidence" value="ECO:0007669"/>
    <property type="project" value="UniProtKB-UniRule"/>
</dbReference>
<dbReference type="GO" id="GO:0030145">
    <property type="term" value="F:manganese ion binding"/>
    <property type="evidence" value="ECO:0007669"/>
    <property type="project" value="TreeGrafter"/>
</dbReference>
<dbReference type="GO" id="GO:0033850">
    <property type="term" value="F:Z-farnesyl diphosphate synthase activity"/>
    <property type="evidence" value="ECO:0007669"/>
    <property type="project" value="TreeGrafter"/>
</dbReference>
<dbReference type="GO" id="GO:0016094">
    <property type="term" value="P:polyprenol biosynthetic process"/>
    <property type="evidence" value="ECO:0007669"/>
    <property type="project" value="TreeGrafter"/>
</dbReference>
<dbReference type="CDD" id="cd00475">
    <property type="entry name" value="Cis_IPPS"/>
    <property type="match status" value="1"/>
</dbReference>
<dbReference type="FunFam" id="3.40.1180.10:FF:000001">
    <property type="entry name" value="(2E,6E)-farnesyl-diphosphate-specific ditrans,polycis-undecaprenyl-diphosphate synthase"/>
    <property type="match status" value="1"/>
</dbReference>
<dbReference type="Gene3D" id="3.40.1180.10">
    <property type="entry name" value="Decaprenyl diphosphate synthase-like"/>
    <property type="match status" value="1"/>
</dbReference>
<dbReference type="HAMAP" id="MF_01139">
    <property type="entry name" value="ISPT"/>
    <property type="match status" value="1"/>
</dbReference>
<dbReference type="InterPro" id="IPR001441">
    <property type="entry name" value="UPP_synth-like"/>
</dbReference>
<dbReference type="InterPro" id="IPR018520">
    <property type="entry name" value="UPP_synth-like_CS"/>
</dbReference>
<dbReference type="InterPro" id="IPR036424">
    <property type="entry name" value="UPP_synth-like_sf"/>
</dbReference>
<dbReference type="NCBIfam" id="NF011404">
    <property type="entry name" value="PRK14829.1"/>
    <property type="match status" value="1"/>
</dbReference>
<dbReference type="NCBIfam" id="TIGR00055">
    <property type="entry name" value="uppS"/>
    <property type="match status" value="1"/>
</dbReference>
<dbReference type="PANTHER" id="PTHR10291:SF0">
    <property type="entry name" value="DEHYDRODOLICHYL DIPHOSPHATE SYNTHASE 2"/>
    <property type="match status" value="1"/>
</dbReference>
<dbReference type="PANTHER" id="PTHR10291">
    <property type="entry name" value="DEHYDRODOLICHYL DIPHOSPHATE SYNTHASE FAMILY MEMBER"/>
    <property type="match status" value="1"/>
</dbReference>
<dbReference type="Pfam" id="PF01255">
    <property type="entry name" value="Prenyltransf"/>
    <property type="match status" value="1"/>
</dbReference>
<dbReference type="SUPFAM" id="SSF64005">
    <property type="entry name" value="Undecaprenyl diphosphate synthase"/>
    <property type="match status" value="1"/>
</dbReference>
<dbReference type="PROSITE" id="PS01066">
    <property type="entry name" value="UPP_SYNTHASE"/>
    <property type="match status" value="1"/>
</dbReference>
<protein>
    <recommendedName>
        <fullName evidence="1">Isoprenyl transferase 2</fullName>
        <ecNumber evidence="1">2.5.1.-</ecNumber>
    </recommendedName>
</protein>
<keyword id="KW-0460">Magnesium</keyword>
<keyword id="KW-0479">Metal-binding</keyword>
<keyword id="KW-1185">Reference proteome</keyword>
<keyword id="KW-0808">Transferase</keyword>
<reference key="1">
    <citation type="journal article" date="2003" name="Genome Res.">
        <title>Comparative complete genome sequence analysis of the amino acid replacements responsible for the thermostability of Corynebacterium efficiens.</title>
        <authorList>
            <person name="Nishio Y."/>
            <person name="Nakamura Y."/>
            <person name="Kawarabayasi Y."/>
            <person name="Usuda Y."/>
            <person name="Kimura E."/>
            <person name="Sugimoto S."/>
            <person name="Matsui K."/>
            <person name="Yamagishi A."/>
            <person name="Kikuchi H."/>
            <person name="Ikeo K."/>
            <person name="Gojobori T."/>
        </authorList>
    </citation>
    <scope>NUCLEOTIDE SEQUENCE [LARGE SCALE GENOMIC DNA]</scope>
    <source>
        <strain>DSM 44549 / YS-314 / AJ 12310 / JCM 11189 / NBRC 100395</strain>
    </source>
</reference>
<comment type="function">
    <text evidence="1">Catalyzes the condensation of isopentenyl diphosphate (IPP) with allylic pyrophosphates generating different type of terpenoids.</text>
</comment>
<comment type="cofactor">
    <cofactor evidence="1">
        <name>Mg(2+)</name>
        <dbReference type="ChEBI" id="CHEBI:18420"/>
    </cofactor>
    <text evidence="1">Binds 2 magnesium ions per subunit.</text>
</comment>
<comment type="subunit">
    <text evidence="1">Homodimer.</text>
</comment>
<comment type="similarity">
    <text evidence="1">Belongs to the UPP synthase family.</text>
</comment>
<organism>
    <name type="scientific">Corynebacterium efficiens (strain DSM 44549 / YS-314 / AJ 12310 / JCM 11189 / NBRC 100395)</name>
    <dbReference type="NCBI Taxonomy" id="196164"/>
    <lineage>
        <taxon>Bacteria</taxon>
        <taxon>Bacillati</taxon>
        <taxon>Actinomycetota</taxon>
        <taxon>Actinomycetes</taxon>
        <taxon>Mycobacteriales</taxon>
        <taxon>Corynebacteriaceae</taxon>
        <taxon>Corynebacterium</taxon>
    </lineage>
</organism>
<evidence type="ECO:0000255" key="1">
    <source>
        <dbReference type="HAMAP-Rule" id="MF_01139"/>
    </source>
</evidence>